<dbReference type="EC" id="4.2.3.4" evidence="1"/>
<dbReference type="EMBL" id="CP000302">
    <property type="protein sequence ID" value="ABE53558.1"/>
    <property type="molecule type" value="Genomic_DNA"/>
</dbReference>
<dbReference type="RefSeq" id="WP_011494725.1">
    <property type="nucleotide sequence ID" value="NC_007954.1"/>
</dbReference>
<dbReference type="SMR" id="Q12SL8"/>
<dbReference type="STRING" id="318161.Sden_0262"/>
<dbReference type="KEGG" id="sdn:Sden_0262"/>
<dbReference type="eggNOG" id="COG0337">
    <property type="taxonomic scope" value="Bacteria"/>
</dbReference>
<dbReference type="HOGENOM" id="CLU_001201_0_2_6"/>
<dbReference type="OrthoDB" id="9806583at2"/>
<dbReference type="UniPathway" id="UPA00053">
    <property type="reaction ID" value="UER00085"/>
</dbReference>
<dbReference type="Proteomes" id="UP000001982">
    <property type="component" value="Chromosome"/>
</dbReference>
<dbReference type="GO" id="GO:0005737">
    <property type="term" value="C:cytoplasm"/>
    <property type="evidence" value="ECO:0007669"/>
    <property type="project" value="UniProtKB-SubCell"/>
</dbReference>
<dbReference type="GO" id="GO:0003856">
    <property type="term" value="F:3-dehydroquinate synthase activity"/>
    <property type="evidence" value="ECO:0007669"/>
    <property type="project" value="UniProtKB-UniRule"/>
</dbReference>
<dbReference type="GO" id="GO:0046872">
    <property type="term" value="F:metal ion binding"/>
    <property type="evidence" value="ECO:0007669"/>
    <property type="project" value="UniProtKB-KW"/>
</dbReference>
<dbReference type="GO" id="GO:0000166">
    <property type="term" value="F:nucleotide binding"/>
    <property type="evidence" value="ECO:0007669"/>
    <property type="project" value="UniProtKB-KW"/>
</dbReference>
<dbReference type="GO" id="GO:0008652">
    <property type="term" value="P:amino acid biosynthetic process"/>
    <property type="evidence" value="ECO:0007669"/>
    <property type="project" value="UniProtKB-KW"/>
</dbReference>
<dbReference type="GO" id="GO:0009073">
    <property type="term" value="P:aromatic amino acid family biosynthetic process"/>
    <property type="evidence" value="ECO:0007669"/>
    <property type="project" value="UniProtKB-KW"/>
</dbReference>
<dbReference type="GO" id="GO:0009423">
    <property type="term" value="P:chorismate biosynthetic process"/>
    <property type="evidence" value="ECO:0007669"/>
    <property type="project" value="UniProtKB-UniRule"/>
</dbReference>
<dbReference type="CDD" id="cd08195">
    <property type="entry name" value="DHQS"/>
    <property type="match status" value="1"/>
</dbReference>
<dbReference type="FunFam" id="1.20.1090.10:FF:000002">
    <property type="entry name" value="3-dehydroquinate synthase"/>
    <property type="match status" value="1"/>
</dbReference>
<dbReference type="FunFam" id="3.40.50.1970:FF:000001">
    <property type="entry name" value="3-dehydroquinate synthase"/>
    <property type="match status" value="1"/>
</dbReference>
<dbReference type="Gene3D" id="3.40.50.1970">
    <property type="match status" value="1"/>
</dbReference>
<dbReference type="Gene3D" id="1.20.1090.10">
    <property type="entry name" value="Dehydroquinate synthase-like - alpha domain"/>
    <property type="match status" value="1"/>
</dbReference>
<dbReference type="HAMAP" id="MF_00110">
    <property type="entry name" value="DHQ_synthase"/>
    <property type="match status" value="1"/>
</dbReference>
<dbReference type="InterPro" id="IPR050071">
    <property type="entry name" value="Dehydroquinate_synthase"/>
</dbReference>
<dbReference type="InterPro" id="IPR016037">
    <property type="entry name" value="DHQ_synth_AroB"/>
</dbReference>
<dbReference type="InterPro" id="IPR030963">
    <property type="entry name" value="DHQ_synth_fam"/>
</dbReference>
<dbReference type="InterPro" id="IPR030960">
    <property type="entry name" value="DHQS/DOIS_N"/>
</dbReference>
<dbReference type="InterPro" id="IPR056179">
    <property type="entry name" value="DHQS_C"/>
</dbReference>
<dbReference type="NCBIfam" id="TIGR01357">
    <property type="entry name" value="aroB"/>
    <property type="match status" value="1"/>
</dbReference>
<dbReference type="PANTHER" id="PTHR43622">
    <property type="entry name" value="3-DEHYDROQUINATE SYNTHASE"/>
    <property type="match status" value="1"/>
</dbReference>
<dbReference type="PANTHER" id="PTHR43622:SF7">
    <property type="entry name" value="3-DEHYDROQUINATE SYNTHASE, CHLOROPLASTIC"/>
    <property type="match status" value="1"/>
</dbReference>
<dbReference type="Pfam" id="PF01761">
    <property type="entry name" value="DHQ_synthase"/>
    <property type="match status" value="1"/>
</dbReference>
<dbReference type="Pfam" id="PF24621">
    <property type="entry name" value="DHQS_C"/>
    <property type="match status" value="1"/>
</dbReference>
<dbReference type="PIRSF" id="PIRSF001455">
    <property type="entry name" value="DHQ_synth"/>
    <property type="match status" value="1"/>
</dbReference>
<dbReference type="SUPFAM" id="SSF56796">
    <property type="entry name" value="Dehydroquinate synthase-like"/>
    <property type="match status" value="1"/>
</dbReference>
<name>AROB_SHEDO</name>
<sequence>MQQIQVNLGDRSYPIHIGLDLLKQQQTFQSLQSKKVFIVTNDVVAPLYLTQVKAALADCASVDVFVLPDGEKNKDLAHLEQIFSALLEKNYARDTTLLALGGGVIGDMTGFAAACYQRGVPFVQVPTTLLAQVDSSVGGKTAVNHPLGKNMIGAFYQPQCVIIDTQCLHSLPKAEFDAGMAEVIKYGIIWDAEFFLWLENNIAALKALDTQALTYAIAKCCAIKADIVSQDETEQGVRALLNLGHTFGHAIEAQMGYGNWLHGQAVAAGSVLAAKTALALGLLDALSVQRIENLFRAFDLPIDGPQSMAFSDYMRHMRRDKKVLASKIRLILPQAIGQAGIYSDVDEALLAQVINPS</sequence>
<evidence type="ECO:0000255" key="1">
    <source>
        <dbReference type="HAMAP-Rule" id="MF_00110"/>
    </source>
</evidence>
<accession>Q12SL8</accession>
<protein>
    <recommendedName>
        <fullName evidence="1">3-dehydroquinate synthase</fullName>
        <shortName evidence="1">DHQS</shortName>
        <ecNumber evidence="1">4.2.3.4</ecNumber>
    </recommendedName>
</protein>
<proteinExistence type="inferred from homology"/>
<feature type="chain" id="PRO_1000094609" description="3-dehydroquinate synthase">
    <location>
        <begin position="1"/>
        <end position="357"/>
    </location>
</feature>
<feature type="binding site" evidence="1">
    <location>
        <begin position="69"/>
        <end position="74"/>
    </location>
    <ligand>
        <name>NAD(+)</name>
        <dbReference type="ChEBI" id="CHEBI:57540"/>
    </ligand>
</feature>
<feature type="binding site" evidence="1">
    <location>
        <begin position="103"/>
        <end position="107"/>
    </location>
    <ligand>
        <name>NAD(+)</name>
        <dbReference type="ChEBI" id="CHEBI:57540"/>
    </ligand>
</feature>
<feature type="binding site" evidence="1">
    <location>
        <begin position="127"/>
        <end position="128"/>
    </location>
    <ligand>
        <name>NAD(+)</name>
        <dbReference type="ChEBI" id="CHEBI:57540"/>
    </ligand>
</feature>
<feature type="binding site" evidence="1">
    <location>
        <position position="140"/>
    </location>
    <ligand>
        <name>NAD(+)</name>
        <dbReference type="ChEBI" id="CHEBI:57540"/>
    </ligand>
</feature>
<feature type="binding site" evidence="1">
    <location>
        <position position="149"/>
    </location>
    <ligand>
        <name>NAD(+)</name>
        <dbReference type="ChEBI" id="CHEBI:57540"/>
    </ligand>
</feature>
<feature type="binding site" evidence="1">
    <location>
        <position position="182"/>
    </location>
    <ligand>
        <name>Zn(2+)</name>
        <dbReference type="ChEBI" id="CHEBI:29105"/>
    </ligand>
</feature>
<feature type="binding site" evidence="1">
    <location>
        <position position="245"/>
    </location>
    <ligand>
        <name>Zn(2+)</name>
        <dbReference type="ChEBI" id="CHEBI:29105"/>
    </ligand>
</feature>
<feature type="binding site" evidence="1">
    <location>
        <position position="262"/>
    </location>
    <ligand>
        <name>Zn(2+)</name>
        <dbReference type="ChEBI" id="CHEBI:29105"/>
    </ligand>
</feature>
<comment type="function">
    <text evidence="1">Catalyzes the conversion of 3-deoxy-D-arabino-heptulosonate 7-phosphate (DAHP) to dehydroquinate (DHQ).</text>
</comment>
<comment type="catalytic activity">
    <reaction evidence="1">
        <text>7-phospho-2-dehydro-3-deoxy-D-arabino-heptonate = 3-dehydroquinate + phosphate</text>
        <dbReference type="Rhea" id="RHEA:21968"/>
        <dbReference type="ChEBI" id="CHEBI:32364"/>
        <dbReference type="ChEBI" id="CHEBI:43474"/>
        <dbReference type="ChEBI" id="CHEBI:58394"/>
        <dbReference type="EC" id="4.2.3.4"/>
    </reaction>
</comment>
<comment type="cofactor">
    <cofactor evidence="1">
        <name>Co(2+)</name>
        <dbReference type="ChEBI" id="CHEBI:48828"/>
    </cofactor>
    <cofactor evidence="1">
        <name>Zn(2+)</name>
        <dbReference type="ChEBI" id="CHEBI:29105"/>
    </cofactor>
    <text evidence="1">Binds 1 divalent metal cation per subunit. Can use either Co(2+) or Zn(2+).</text>
</comment>
<comment type="cofactor">
    <cofactor evidence="1">
        <name>NAD(+)</name>
        <dbReference type="ChEBI" id="CHEBI:57540"/>
    </cofactor>
</comment>
<comment type="pathway">
    <text evidence="1">Metabolic intermediate biosynthesis; chorismate biosynthesis; chorismate from D-erythrose 4-phosphate and phosphoenolpyruvate: step 2/7.</text>
</comment>
<comment type="subcellular location">
    <subcellularLocation>
        <location evidence="1">Cytoplasm</location>
    </subcellularLocation>
</comment>
<comment type="similarity">
    <text evidence="1">Belongs to the sugar phosphate cyclases superfamily. Dehydroquinate synthase family.</text>
</comment>
<gene>
    <name evidence="1" type="primary">aroB</name>
    <name type="ordered locus">Sden_0262</name>
</gene>
<reference key="1">
    <citation type="submission" date="2006-03" db="EMBL/GenBank/DDBJ databases">
        <title>Complete sequence of Shewanella denitrificans OS217.</title>
        <authorList>
            <consortium name="US DOE Joint Genome Institute"/>
            <person name="Copeland A."/>
            <person name="Lucas S."/>
            <person name="Lapidus A."/>
            <person name="Barry K."/>
            <person name="Detter J.C."/>
            <person name="Glavina del Rio T."/>
            <person name="Hammon N."/>
            <person name="Israni S."/>
            <person name="Dalin E."/>
            <person name="Tice H."/>
            <person name="Pitluck S."/>
            <person name="Brettin T."/>
            <person name="Bruce D."/>
            <person name="Han C."/>
            <person name="Tapia R."/>
            <person name="Gilna P."/>
            <person name="Kiss H."/>
            <person name="Schmutz J."/>
            <person name="Larimer F."/>
            <person name="Land M."/>
            <person name="Hauser L."/>
            <person name="Kyrpides N."/>
            <person name="Lykidis A."/>
            <person name="Richardson P."/>
        </authorList>
    </citation>
    <scope>NUCLEOTIDE SEQUENCE [LARGE SCALE GENOMIC DNA]</scope>
    <source>
        <strain>OS217 / ATCC BAA-1090 / DSM 15013</strain>
    </source>
</reference>
<keyword id="KW-0028">Amino-acid biosynthesis</keyword>
<keyword id="KW-0057">Aromatic amino acid biosynthesis</keyword>
<keyword id="KW-0170">Cobalt</keyword>
<keyword id="KW-0963">Cytoplasm</keyword>
<keyword id="KW-0456">Lyase</keyword>
<keyword id="KW-0479">Metal-binding</keyword>
<keyword id="KW-0520">NAD</keyword>
<keyword id="KW-0547">Nucleotide-binding</keyword>
<keyword id="KW-1185">Reference proteome</keyword>
<keyword id="KW-0862">Zinc</keyword>
<organism>
    <name type="scientific">Shewanella denitrificans (strain OS217 / ATCC BAA-1090 / DSM 15013)</name>
    <dbReference type="NCBI Taxonomy" id="318161"/>
    <lineage>
        <taxon>Bacteria</taxon>
        <taxon>Pseudomonadati</taxon>
        <taxon>Pseudomonadota</taxon>
        <taxon>Gammaproteobacteria</taxon>
        <taxon>Alteromonadales</taxon>
        <taxon>Shewanellaceae</taxon>
        <taxon>Shewanella</taxon>
    </lineage>
</organism>